<organism>
    <name type="scientific">Rattus norvegicus</name>
    <name type="common">Rat</name>
    <dbReference type="NCBI Taxonomy" id="10116"/>
    <lineage>
        <taxon>Eukaryota</taxon>
        <taxon>Metazoa</taxon>
        <taxon>Chordata</taxon>
        <taxon>Craniata</taxon>
        <taxon>Vertebrata</taxon>
        <taxon>Euteleostomi</taxon>
        <taxon>Mammalia</taxon>
        <taxon>Eutheria</taxon>
        <taxon>Euarchontoglires</taxon>
        <taxon>Glires</taxon>
        <taxon>Rodentia</taxon>
        <taxon>Myomorpha</taxon>
        <taxon>Muroidea</taxon>
        <taxon>Muridae</taxon>
        <taxon>Murinae</taxon>
        <taxon>Rattus</taxon>
    </lineage>
</organism>
<gene>
    <name type="primary">Psma4</name>
</gene>
<name>PSA4_RAT</name>
<comment type="function">
    <text evidence="1">Component of the 20S core proteasome complex involved in the proteolytic degradation of most intracellular proteins. This complex plays numerous essential roles within the cell by associating with different regulatory particles. Associated with two 19S regulatory particles, forms the 26S proteasome and thus participates in the ATP-dependent degradation of ubiquitinated proteins. The 26S proteasome plays a key role in the maintenance of protein homeostasis by removing misfolded or damaged proteins that could impair cellular functions, and by removing proteins whose functions are no longer required. Associated with the PA200 or PA28, the 20S proteasome mediates ubiquitin-independent protein degradation. This type of proteolysis is required in several pathways including spermatogenesis (20S-PA200 complex) or generation of a subset of MHC class I-presented antigenic peptides (20S-PA28 complex).</text>
</comment>
<comment type="subunit">
    <text evidence="1">The 26S proteasome consists of a 20S proteasome core and two 19S regulatory subunits. The 20S proteasome core is a barrel-shaped complex made of 28 subunits that are arranged in four stacked rings. The two outer rings are each formed by seven alpha subunits, and the two inner rings are formed by seven beta subunits. The proteolytic activity is exerted by three beta-subunits PSMB5, PSMB6 and PSMB7.</text>
</comment>
<comment type="subcellular location">
    <subcellularLocation>
        <location evidence="1">Cytoplasm</location>
    </subcellularLocation>
    <subcellularLocation>
        <location evidence="1">Nucleus</location>
    </subcellularLocation>
    <text evidence="1 2">Translocated from the cytoplasm into the nucleus following interaction with AKIRIN2, which bridges the proteasome with the nuclear import receptor IPO9 (By similarity). Colocalizes with TRIM5 in the cytoplasmic bodies (By similarity).</text>
</comment>
<comment type="tissue specificity">
    <text>Ubiquitous.</text>
</comment>
<comment type="similarity">
    <text evidence="3">Belongs to the peptidase T1A family.</text>
</comment>
<protein>
    <recommendedName>
        <fullName>Proteasome subunit alpha type-4</fullName>
    </recommendedName>
    <alternativeName>
        <fullName>Macropain subunit C9</fullName>
    </alternativeName>
    <alternativeName>
        <fullName>Multicatalytic endopeptidase complex subunit C9</fullName>
    </alternativeName>
    <alternativeName>
        <fullName>Proteasome component C9</fullName>
    </alternativeName>
    <alternativeName>
        <fullName>Proteasome subunit L</fullName>
    </alternativeName>
    <alternativeName>
        <fullName>Proteasome subunit alpha-3</fullName>
        <shortName>alpha-3</shortName>
    </alternativeName>
</protein>
<keyword id="KW-0002">3D-structure</keyword>
<keyword id="KW-0007">Acetylation</keyword>
<keyword id="KW-0963">Cytoplasm</keyword>
<keyword id="KW-0903">Direct protein sequencing</keyword>
<keyword id="KW-0539">Nucleus</keyword>
<keyword id="KW-0597">Phosphoprotein</keyword>
<keyword id="KW-0647">Proteasome</keyword>
<keyword id="KW-1185">Reference proteome</keyword>
<sequence length="261" mass="29498">MSRRYDSRTTIFSPEGRLYQVEYAMEAIGHAGTCLGILANDGVLLAAERRNIHKLLDEVFFSEKIYKLNEDMACSVAGITSDANVLTNELRLIAQRYLLQYQEPIPCEQLVTALCDIKQAYTQFGGKRPFGVSLLYIGWDKHYGFQLYQSDPSGNYGGWKATCIGNNSAAAVSMLKQDYKEGEMTLKSALALAVKVLNKTMDVSKLSAEKVEIATLTRENGKTVIRVLKQKEVEQLIKKHEEEEAKAEREKKEKEQREKDK</sequence>
<accession>P21670</accession>
<proteinExistence type="evidence at protein level"/>
<dbReference type="EMBL" id="X53304">
    <property type="protein sequence ID" value="CAA37390.1"/>
    <property type="molecule type" value="mRNA"/>
</dbReference>
<dbReference type="EMBL" id="X55986">
    <property type="protein sequence ID" value="CAA39458.1"/>
    <property type="molecule type" value="mRNA"/>
</dbReference>
<dbReference type="PIR" id="S10566">
    <property type="entry name" value="SNRTC9"/>
</dbReference>
<dbReference type="RefSeq" id="NP_058977.1">
    <property type="nucleotide sequence ID" value="NM_017281.1"/>
</dbReference>
<dbReference type="RefSeq" id="XP_038936898.1">
    <property type="nucleotide sequence ID" value="XM_039080970.2"/>
</dbReference>
<dbReference type="PDB" id="6EPC">
    <property type="method" value="EM"/>
    <property type="resolution" value="12.30 A"/>
    <property type="chains" value="C=1-261"/>
</dbReference>
<dbReference type="PDB" id="6EPD">
    <property type="method" value="EM"/>
    <property type="resolution" value="15.40 A"/>
    <property type="chains" value="C=1-261"/>
</dbReference>
<dbReference type="PDB" id="6EPE">
    <property type="method" value="EM"/>
    <property type="resolution" value="12.80 A"/>
    <property type="chains" value="C=1-261"/>
</dbReference>
<dbReference type="PDB" id="6EPF">
    <property type="method" value="EM"/>
    <property type="resolution" value="11.80 A"/>
    <property type="chains" value="C=1-261"/>
</dbReference>
<dbReference type="PDB" id="6TU3">
    <property type="method" value="EM"/>
    <property type="resolution" value="2.70 A"/>
    <property type="chains" value="C/Q=1-261"/>
</dbReference>
<dbReference type="PDBsum" id="6EPC"/>
<dbReference type="PDBsum" id="6EPD"/>
<dbReference type="PDBsum" id="6EPE"/>
<dbReference type="PDBsum" id="6EPF"/>
<dbReference type="PDBsum" id="6TU3"/>
<dbReference type="EMDB" id="EMD-10586"/>
<dbReference type="EMDB" id="EMD-3913"/>
<dbReference type="EMDB" id="EMD-3914"/>
<dbReference type="EMDB" id="EMD-3915"/>
<dbReference type="EMDB" id="EMD-3916"/>
<dbReference type="SMR" id="P21670"/>
<dbReference type="BioGRID" id="248292">
    <property type="interactions" value="2"/>
</dbReference>
<dbReference type="ComplexPortal" id="CPX-8965">
    <property type="entry name" value="30S proteasome complex"/>
</dbReference>
<dbReference type="FunCoup" id="P21670">
    <property type="interactions" value="3481"/>
</dbReference>
<dbReference type="IntAct" id="P21670">
    <property type="interactions" value="2"/>
</dbReference>
<dbReference type="STRING" id="10116.ENSRNOP00000018173"/>
<dbReference type="MEROPS" id="T01.973"/>
<dbReference type="iPTMnet" id="P21670"/>
<dbReference type="PhosphoSitePlus" id="P21670"/>
<dbReference type="jPOST" id="P21670"/>
<dbReference type="PaxDb" id="10116-ENSRNOP00000018173"/>
<dbReference type="Ensembl" id="ENSRNOT00000018173.7">
    <property type="protein sequence ID" value="ENSRNOP00000018173.5"/>
    <property type="gene ID" value="ENSRNOG00000013493.7"/>
</dbReference>
<dbReference type="GeneID" id="29671"/>
<dbReference type="KEGG" id="rno:29671"/>
<dbReference type="UCSC" id="RGD:61846">
    <property type="organism name" value="rat"/>
</dbReference>
<dbReference type="AGR" id="RGD:61846"/>
<dbReference type="CTD" id="5685"/>
<dbReference type="RGD" id="61846">
    <property type="gene designation" value="Psma4"/>
</dbReference>
<dbReference type="eggNOG" id="KOG0178">
    <property type="taxonomic scope" value="Eukaryota"/>
</dbReference>
<dbReference type="GeneTree" id="ENSGT00550000074827"/>
<dbReference type="HOGENOM" id="CLU_035750_4_3_1"/>
<dbReference type="InParanoid" id="P21670"/>
<dbReference type="OMA" id="YVLNDNM"/>
<dbReference type="OrthoDB" id="431557at2759"/>
<dbReference type="PhylomeDB" id="P21670"/>
<dbReference type="TreeFam" id="TF106209"/>
<dbReference type="Reactome" id="R-RNO-1169091">
    <property type="pathway name" value="Activation of NF-kappaB in B cells"/>
</dbReference>
<dbReference type="Reactome" id="R-RNO-1234176">
    <property type="pathway name" value="Oxygen-dependent proline hydroxylation of Hypoxia-inducible Factor Alpha"/>
</dbReference>
<dbReference type="Reactome" id="R-RNO-1236978">
    <property type="pathway name" value="Cross-presentation of soluble exogenous antigens (endosomes)"/>
</dbReference>
<dbReference type="Reactome" id="R-RNO-174084">
    <property type="pathway name" value="Autodegradation of Cdh1 by Cdh1:APC/C"/>
</dbReference>
<dbReference type="Reactome" id="R-RNO-174113">
    <property type="pathway name" value="SCF-beta-TrCP mediated degradation of Emi1"/>
</dbReference>
<dbReference type="Reactome" id="R-RNO-174154">
    <property type="pathway name" value="APC/C:Cdc20 mediated degradation of Securin"/>
</dbReference>
<dbReference type="Reactome" id="R-RNO-174178">
    <property type="pathway name" value="APC/C:Cdh1 mediated degradation of Cdc20 and other APC/C:Cdh1 targeted proteins in late mitosis/early G1"/>
</dbReference>
<dbReference type="Reactome" id="R-RNO-174184">
    <property type="pathway name" value="Cdc20:Phospho-APC/C mediated degradation of Cyclin A"/>
</dbReference>
<dbReference type="Reactome" id="R-RNO-187577">
    <property type="pathway name" value="SCF(Skp2)-mediated degradation of p27/p21"/>
</dbReference>
<dbReference type="Reactome" id="R-RNO-195253">
    <property type="pathway name" value="Degradation of beta-catenin by the destruction complex"/>
</dbReference>
<dbReference type="Reactome" id="R-RNO-2467813">
    <property type="pathway name" value="Separation of Sister Chromatids"/>
</dbReference>
<dbReference type="Reactome" id="R-RNO-349425">
    <property type="pathway name" value="Autodegradation of the E3 ubiquitin ligase COP1"/>
</dbReference>
<dbReference type="Reactome" id="R-RNO-350562">
    <property type="pathway name" value="Regulation of ornithine decarboxylase (ODC)"/>
</dbReference>
<dbReference type="Reactome" id="R-RNO-382556">
    <property type="pathway name" value="ABC-family proteins mediated transport"/>
</dbReference>
<dbReference type="Reactome" id="R-RNO-450408">
    <property type="pathway name" value="AUF1 (hnRNP D0) binds and destabilizes mRNA"/>
</dbReference>
<dbReference type="Reactome" id="R-RNO-4608870">
    <property type="pathway name" value="Asymmetric localization of PCP proteins"/>
</dbReference>
<dbReference type="Reactome" id="R-RNO-4641257">
    <property type="pathway name" value="Degradation of AXIN"/>
</dbReference>
<dbReference type="Reactome" id="R-RNO-4641258">
    <property type="pathway name" value="Degradation of DVL"/>
</dbReference>
<dbReference type="Reactome" id="R-RNO-5358346">
    <property type="pathway name" value="Hedgehog ligand biogenesis"/>
</dbReference>
<dbReference type="Reactome" id="R-RNO-5607761">
    <property type="pathway name" value="Dectin-1 mediated noncanonical NF-kB signaling"/>
</dbReference>
<dbReference type="Reactome" id="R-RNO-5610780">
    <property type="pathway name" value="Degradation of GLI1 by the proteasome"/>
</dbReference>
<dbReference type="Reactome" id="R-RNO-5610785">
    <property type="pathway name" value="GLI3 is processed to GLI3R by the proteasome"/>
</dbReference>
<dbReference type="Reactome" id="R-RNO-5632684">
    <property type="pathway name" value="Hedgehog 'on' state"/>
</dbReference>
<dbReference type="Reactome" id="R-RNO-5658442">
    <property type="pathway name" value="Regulation of RAS by GAPs"/>
</dbReference>
<dbReference type="Reactome" id="R-RNO-5668541">
    <property type="pathway name" value="TNFR2 non-canonical NF-kB pathway"/>
</dbReference>
<dbReference type="Reactome" id="R-RNO-5676590">
    <property type="pathway name" value="NIK--&gt;noncanonical NF-kB signaling"/>
</dbReference>
<dbReference type="Reactome" id="R-RNO-5687128">
    <property type="pathway name" value="MAPK6/MAPK4 signaling"/>
</dbReference>
<dbReference type="Reactome" id="R-RNO-5689603">
    <property type="pathway name" value="UCH proteinases"/>
</dbReference>
<dbReference type="Reactome" id="R-RNO-5689880">
    <property type="pathway name" value="Ub-specific processing proteases"/>
</dbReference>
<dbReference type="Reactome" id="R-RNO-68867">
    <property type="pathway name" value="Assembly of the pre-replicative complex"/>
</dbReference>
<dbReference type="Reactome" id="R-RNO-68949">
    <property type="pathway name" value="Orc1 removal from chromatin"/>
</dbReference>
<dbReference type="Reactome" id="R-RNO-69017">
    <property type="pathway name" value="CDK-mediated phosphorylation and removal of Cdc6"/>
</dbReference>
<dbReference type="Reactome" id="R-RNO-69481">
    <property type="pathway name" value="G2/M Checkpoints"/>
</dbReference>
<dbReference type="Reactome" id="R-RNO-69601">
    <property type="pathway name" value="Ubiquitin Mediated Degradation of Phosphorylated Cdc25A"/>
</dbReference>
<dbReference type="Reactome" id="R-RNO-75815">
    <property type="pathway name" value="Ubiquitin-dependent degradation of Cyclin D"/>
</dbReference>
<dbReference type="Reactome" id="R-RNO-8852276">
    <property type="pathway name" value="The role of GTSE1 in G2/M progression after G2 checkpoint"/>
</dbReference>
<dbReference type="Reactome" id="R-RNO-8854050">
    <property type="pathway name" value="FBXL7 down-regulates AURKA during mitotic entry and in early mitosis"/>
</dbReference>
<dbReference type="Reactome" id="R-RNO-8939236">
    <property type="pathway name" value="RUNX1 regulates transcription of genes involved in differentiation of HSCs"/>
</dbReference>
<dbReference type="Reactome" id="R-RNO-8941858">
    <property type="pathway name" value="Regulation of RUNX3 expression and activity"/>
</dbReference>
<dbReference type="Reactome" id="R-RNO-8948751">
    <property type="pathway name" value="Regulation of PTEN stability and activity"/>
</dbReference>
<dbReference type="Reactome" id="R-RNO-8951664">
    <property type="pathway name" value="Neddylation"/>
</dbReference>
<dbReference type="Reactome" id="R-RNO-9755511">
    <property type="pathway name" value="KEAP1-NFE2L2 pathway"/>
</dbReference>
<dbReference type="Reactome" id="R-RNO-9762114">
    <property type="pathway name" value="GSK3B and BTRC:CUL1-mediated-degradation of NFE2L2"/>
</dbReference>
<dbReference type="Reactome" id="R-RNO-983168">
    <property type="pathway name" value="Antigen processing: Ubiquitination &amp; Proteasome degradation"/>
</dbReference>
<dbReference type="Reactome" id="R-RNO-9907900">
    <property type="pathway name" value="Proteasome assembly"/>
</dbReference>
<dbReference type="PRO" id="PR:P21670"/>
<dbReference type="Proteomes" id="UP000002494">
    <property type="component" value="Chromosome 8"/>
</dbReference>
<dbReference type="Bgee" id="ENSRNOG00000013493">
    <property type="expression patterns" value="Expressed in ovary and 20 other cell types or tissues"/>
</dbReference>
<dbReference type="GO" id="GO:0005737">
    <property type="term" value="C:cytoplasm"/>
    <property type="evidence" value="ECO:0000266"/>
    <property type="project" value="RGD"/>
</dbReference>
<dbReference type="GO" id="GO:0005829">
    <property type="term" value="C:cytosol"/>
    <property type="evidence" value="ECO:0000318"/>
    <property type="project" value="GO_Central"/>
</dbReference>
<dbReference type="GO" id="GO:0005654">
    <property type="term" value="C:nucleoplasm"/>
    <property type="evidence" value="ECO:0007669"/>
    <property type="project" value="Ensembl"/>
</dbReference>
<dbReference type="GO" id="GO:0005634">
    <property type="term" value="C:nucleus"/>
    <property type="evidence" value="ECO:0000266"/>
    <property type="project" value="RGD"/>
</dbReference>
<dbReference type="GO" id="GO:0000932">
    <property type="term" value="C:P-body"/>
    <property type="evidence" value="ECO:0000250"/>
    <property type="project" value="UniProtKB"/>
</dbReference>
<dbReference type="GO" id="GO:0000502">
    <property type="term" value="C:proteasome complex"/>
    <property type="evidence" value="ECO:0000266"/>
    <property type="project" value="RGD"/>
</dbReference>
<dbReference type="GO" id="GO:0005839">
    <property type="term" value="C:proteasome core complex"/>
    <property type="evidence" value="ECO:0000250"/>
    <property type="project" value="UniProtKB"/>
</dbReference>
<dbReference type="GO" id="GO:0019773">
    <property type="term" value="C:proteasome core complex, alpha-subunit complex"/>
    <property type="evidence" value="ECO:0000250"/>
    <property type="project" value="UniProtKB"/>
</dbReference>
<dbReference type="GO" id="GO:0043161">
    <property type="term" value="P:proteasome-mediated ubiquitin-dependent protein catabolic process"/>
    <property type="evidence" value="ECO:0000318"/>
    <property type="project" value="GO_Central"/>
</dbReference>
<dbReference type="CDD" id="cd03752">
    <property type="entry name" value="proteasome_alpha_type_4"/>
    <property type="match status" value="1"/>
</dbReference>
<dbReference type="FunFam" id="3.60.20.10:FF:000022">
    <property type="entry name" value="Proteasome subunit alpha type"/>
    <property type="match status" value="1"/>
</dbReference>
<dbReference type="Gene3D" id="3.60.20.10">
    <property type="entry name" value="Glutamine Phosphoribosylpyrophosphate, subunit 1, domain 1"/>
    <property type="match status" value="1"/>
</dbReference>
<dbReference type="InterPro" id="IPR029055">
    <property type="entry name" value="Ntn_hydrolases_N"/>
</dbReference>
<dbReference type="InterPro" id="IPR050115">
    <property type="entry name" value="Proteasome_alpha"/>
</dbReference>
<dbReference type="InterPro" id="IPR023332">
    <property type="entry name" value="Proteasome_alpha-type"/>
</dbReference>
<dbReference type="InterPro" id="IPR000426">
    <property type="entry name" value="Proteasome_asu_N"/>
</dbReference>
<dbReference type="InterPro" id="IPR016050">
    <property type="entry name" value="Proteasome_bsu_CS"/>
</dbReference>
<dbReference type="InterPro" id="IPR001353">
    <property type="entry name" value="Proteasome_sua/b"/>
</dbReference>
<dbReference type="NCBIfam" id="NF003075">
    <property type="entry name" value="PRK03996.1"/>
    <property type="match status" value="1"/>
</dbReference>
<dbReference type="PANTHER" id="PTHR11599">
    <property type="entry name" value="PROTEASOME SUBUNIT ALPHA/BETA"/>
    <property type="match status" value="1"/>
</dbReference>
<dbReference type="Pfam" id="PF00227">
    <property type="entry name" value="Proteasome"/>
    <property type="match status" value="1"/>
</dbReference>
<dbReference type="Pfam" id="PF10584">
    <property type="entry name" value="Proteasome_A_N"/>
    <property type="match status" value="1"/>
</dbReference>
<dbReference type="SMART" id="SM00948">
    <property type="entry name" value="Proteasome_A_N"/>
    <property type="match status" value="1"/>
</dbReference>
<dbReference type="SUPFAM" id="SSF56235">
    <property type="entry name" value="N-terminal nucleophile aminohydrolases (Ntn hydrolases)"/>
    <property type="match status" value="1"/>
</dbReference>
<dbReference type="PROSITE" id="PS00388">
    <property type="entry name" value="PROTEASOME_ALPHA_1"/>
    <property type="match status" value="1"/>
</dbReference>
<dbReference type="PROSITE" id="PS51475">
    <property type="entry name" value="PROTEASOME_ALPHA_2"/>
    <property type="match status" value="1"/>
</dbReference>
<feature type="chain" id="PRO_0000124106" description="Proteasome subunit alpha type-4">
    <location>
        <begin position="1"/>
        <end position="261"/>
    </location>
</feature>
<feature type="region of interest" description="Disordered" evidence="4">
    <location>
        <begin position="240"/>
        <end position="261"/>
    </location>
</feature>
<feature type="modified residue" description="Phosphoserine" evidence="1">
    <location>
        <position position="13"/>
    </location>
</feature>
<feature type="modified residue" description="Phosphoserine" evidence="1">
    <location>
        <position position="75"/>
    </location>
</feature>
<feature type="modified residue" description="N6-acetyllysine" evidence="1">
    <location>
        <position position="127"/>
    </location>
</feature>
<feature type="modified residue" description="Phosphoserine" evidence="1">
    <location>
        <position position="173"/>
    </location>
</feature>
<feature type="modified residue" description="N6-acetyllysine" evidence="1">
    <location>
        <position position="176"/>
    </location>
</feature>
<feature type="helix" evidence="5">
    <location>
        <begin position="19"/>
        <end position="29"/>
    </location>
</feature>
<feature type="strand" evidence="5">
    <location>
        <begin position="34"/>
        <end position="39"/>
    </location>
</feature>
<feature type="strand" evidence="5">
    <location>
        <begin position="42"/>
        <end position="48"/>
    </location>
</feature>
<feature type="strand" evidence="5">
    <location>
        <begin position="69"/>
        <end position="71"/>
    </location>
</feature>
<feature type="strand" evidence="5">
    <location>
        <begin position="73"/>
        <end position="78"/>
    </location>
</feature>
<feature type="helix" evidence="5">
    <location>
        <begin position="80"/>
        <end position="101"/>
    </location>
</feature>
<feature type="helix" evidence="5">
    <location>
        <begin position="107"/>
        <end position="120"/>
    </location>
</feature>
<feature type="turn" evidence="5">
    <location>
        <begin position="121"/>
        <end position="123"/>
    </location>
</feature>
<feature type="strand" evidence="5">
    <location>
        <begin position="124"/>
        <end position="126"/>
    </location>
</feature>
<feature type="strand" evidence="5">
    <location>
        <begin position="132"/>
        <end position="138"/>
    </location>
</feature>
<feature type="turn" evidence="5">
    <location>
        <begin position="141"/>
        <end position="143"/>
    </location>
</feature>
<feature type="strand" evidence="5">
    <location>
        <begin position="145"/>
        <end position="150"/>
    </location>
</feature>
<feature type="strand" evidence="5">
    <location>
        <begin position="159"/>
        <end position="167"/>
    </location>
</feature>
<feature type="helix" evidence="5">
    <location>
        <begin position="168"/>
        <end position="176"/>
    </location>
</feature>
<feature type="turn" evidence="5">
    <location>
        <begin position="181"/>
        <end position="183"/>
    </location>
</feature>
<feature type="helix" evidence="5">
    <location>
        <begin position="186"/>
        <end position="200"/>
    </location>
</feature>
<feature type="strand" evidence="5">
    <location>
        <begin position="201"/>
        <end position="205"/>
    </location>
</feature>
<feature type="strand" evidence="5">
    <location>
        <begin position="208"/>
        <end position="219"/>
    </location>
</feature>
<feature type="strand" evidence="5">
    <location>
        <begin position="222"/>
        <end position="227"/>
    </location>
</feature>
<feature type="helix" evidence="5">
    <location>
        <begin position="230"/>
        <end position="247"/>
    </location>
</feature>
<evidence type="ECO:0000250" key="1">
    <source>
        <dbReference type="UniProtKB" id="P25789"/>
    </source>
</evidence>
<evidence type="ECO:0000250" key="2">
    <source>
        <dbReference type="UniProtKB" id="Q9R1P0"/>
    </source>
</evidence>
<evidence type="ECO:0000255" key="3">
    <source>
        <dbReference type="PROSITE-ProRule" id="PRU00808"/>
    </source>
</evidence>
<evidence type="ECO:0000256" key="4">
    <source>
        <dbReference type="SAM" id="MobiDB-lite"/>
    </source>
</evidence>
<evidence type="ECO:0007829" key="5">
    <source>
        <dbReference type="PDB" id="6TU3"/>
    </source>
</evidence>
<reference key="1">
    <citation type="journal article" date="1990" name="FEBS Lett.">
        <title>cDNA cloning and sequencing of component C9 of proteasomes from rat hepatoma cells.</title>
        <authorList>
            <person name="Kumatori A."/>
            <person name="Tanaka K."/>
            <person name="Tamura T."/>
            <person name="Fujiwara T."/>
            <person name="Ichihara A."/>
            <person name="Tokunaga F."/>
            <person name="Onikura A."/>
            <person name="Iwanaga S."/>
        </authorList>
    </citation>
    <scope>NUCLEOTIDE SEQUENCE [MRNA]</scope>
    <scope>PARTIAL PROTEIN SEQUENCE</scope>
    <source>
        <tissue>Liver</tissue>
    </source>
</reference>
<reference key="2">
    <citation type="journal article" date="1990" name="Eur. J. Biochem.">
        <title>Molecular cloning of cDNAs for two subunits of rat multicatalytic proteinase. Existence of N-terminal conserved and C-terminal diverged sequences among subunits.</title>
        <authorList>
            <person name="Sorimachi H."/>
            <person name="Tsukahara T."/>
            <person name="Kawasaki H."/>
            <person name="Ishiura S."/>
            <person name="Emori Y."/>
            <person name="Sugita H."/>
            <person name="Suzuki K."/>
        </authorList>
    </citation>
    <scope>NUCLEOTIDE SEQUENCE [MRNA]</scope>
    <scope>PARTIAL PROTEIN SEQUENCE</scope>
    <source>
        <tissue>Liver</tissue>
    </source>
</reference>